<evidence type="ECO:0000255" key="1">
    <source>
        <dbReference type="HAMAP-Rule" id="MF_00023"/>
    </source>
</evidence>
<evidence type="ECO:0000256" key="2">
    <source>
        <dbReference type="SAM" id="MobiDB-lite"/>
    </source>
</evidence>
<evidence type="ECO:0000305" key="3"/>
<organism>
    <name type="scientific">Neisseria meningitidis serogroup C / serotype 2a (strain ATCC 700532 / DSM 15464 / FAM18)</name>
    <dbReference type="NCBI Taxonomy" id="272831"/>
    <lineage>
        <taxon>Bacteria</taxon>
        <taxon>Pseudomonadati</taxon>
        <taxon>Pseudomonadota</taxon>
        <taxon>Betaproteobacteria</taxon>
        <taxon>Neisseriales</taxon>
        <taxon>Neisseriaceae</taxon>
        <taxon>Neisseria</taxon>
    </lineage>
</organism>
<feature type="chain" id="PRO_0000331069" description="SsrA-binding protein">
    <location>
        <begin position="1"/>
        <end position="148"/>
    </location>
</feature>
<feature type="region of interest" description="Disordered" evidence="2">
    <location>
        <begin position="119"/>
        <end position="148"/>
    </location>
</feature>
<feature type="compositionally biased region" description="Basic and acidic residues" evidence="2">
    <location>
        <begin position="127"/>
        <end position="142"/>
    </location>
</feature>
<keyword id="KW-0963">Cytoplasm</keyword>
<keyword id="KW-0694">RNA-binding</keyword>
<proteinExistence type="inferred from homology"/>
<comment type="function">
    <text evidence="1">Required for rescue of stalled ribosomes mediated by trans-translation. Binds to transfer-messenger RNA (tmRNA), required for stable association of tmRNA with ribosomes. tmRNA and SmpB together mimic tRNA shape, replacing the anticodon stem-loop with SmpB. tmRNA is encoded by the ssrA gene; the 2 termini fold to resemble tRNA(Ala) and it encodes a 'tag peptide', a short internal open reading frame. During trans-translation Ala-aminoacylated tmRNA acts like a tRNA, entering the A-site of stalled ribosomes, displacing the stalled mRNA. The ribosome then switches to translate the ORF on the tmRNA; the nascent peptide is terminated with the 'tag peptide' encoded by the tmRNA and targeted for degradation. The ribosome is freed to recommence translation, which seems to be the essential function of trans-translation.</text>
</comment>
<comment type="subcellular location">
    <subcellularLocation>
        <location evidence="1">Cytoplasm</location>
    </subcellularLocation>
    <text evidence="1">The tmRNA-SmpB complex associates with stalled 70S ribosomes.</text>
</comment>
<comment type="similarity">
    <text evidence="1">Belongs to the SmpB family.</text>
</comment>
<comment type="sequence caution" evidence="3">
    <conflict type="erroneous initiation">
        <sequence resource="EMBL-CDS" id="CAM10662"/>
    </conflict>
    <text>Extended N-terminus.</text>
</comment>
<accession>A1KUW3</accession>
<dbReference type="EMBL" id="AM421808">
    <property type="protein sequence ID" value="CAM10662.1"/>
    <property type="status" value="ALT_INIT"/>
    <property type="molecule type" value="Genomic_DNA"/>
</dbReference>
<dbReference type="RefSeq" id="WP_002229688.1">
    <property type="nucleotide sequence ID" value="NC_008767.1"/>
</dbReference>
<dbReference type="SMR" id="A1KUW3"/>
<dbReference type="GeneID" id="93387853"/>
<dbReference type="KEGG" id="nmc:NMC1455"/>
<dbReference type="HOGENOM" id="CLU_108953_3_0_4"/>
<dbReference type="Proteomes" id="UP000002286">
    <property type="component" value="Chromosome"/>
</dbReference>
<dbReference type="GO" id="GO:0005829">
    <property type="term" value="C:cytosol"/>
    <property type="evidence" value="ECO:0007669"/>
    <property type="project" value="TreeGrafter"/>
</dbReference>
<dbReference type="GO" id="GO:0003723">
    <property type="term" value="F:RNA binding"/>
    <property type="evidence" value="ECO:0007669"/>
    <property type="project" value="UniProtKB-UniRule"/>
</dbReference>
<dbReference type="GO" id="GO:0070929">
    <property type="term" value="P:trans-translation"/>
    <property type="evidence" value="ECO:0007669"/>
    <property type="project" value="UniProtKB-UniRule"/>
</dbReference>
<dbReference type="CDD" id="cd09294">
    <property type="entry name" value="SmpB"/>
    <property type="match status" value="1"/>
</dbReference>
<dbReference type="Gene3D" id="2.40.280.10">
    <property type="match status" value="1"/>
</dbReference>
<dbReference type="HAMAP" id="MF_00023">
    <property type="entry name" value="SmpB"/>
    <property type="match status" value="1"/>
</dbReference>
<dbReference type="InterPro" id="IPR023620">
    <property type="entry name" value="SmpB"/>
</dbReference>
<dbReference type="InterPro" id="IPR000037">
    <property type="entry name" value="SsrA-bd_prot"/>
</dbReference>
<dbReference type="InterPro" id="IPR020081">
    <property type="entry name" value="SsrA-bd_prot_CS"/>
</dbReference>
<dbReference type="NCBIfam" id="NF003843">
    <property type="entry name" value="PRK05422.1"/>
    <property type="match status" value="1"/>
</dbReference>
<dbReference type="NCBIfam" id="TIGR00086">
    <property type="entry name" value="smpB"/>
    <property type="match status" value="1"/>
</dbReference>
<dbReference type="PANTHER" id="PTHR30308:SF2">
    <property type="entry name" value="SSRA-BINDING PROTEIN"/>
    <property type="match status" value="1"/>
</dbReference>
<dbReference type="PANTHER" id="PTHR30308">
    <property type="entry name" value="TMRNA-BINDING COMPONENT OF TRANS-TRANSLATION TAGGING COMPLEX"/>
    <property type="match status" value="1"/>
</dbReference>
<dbReference type="Pfam" id="PF01668">
    <property type="entry name" value="SmpB"/>
    <property type="match status" value="1"/>
</dbReference>
<dbReference type="SUPFAM" id="SSF74982">
    <property type="entry name" value="Small protein B (SmpB)"/>
    <property type="match status" value="1"/>
</dbReference>
<dbReference type="PROSITE" id="PS01317">
    <property type="entry name" value="SSRP"/>
    <property type="match status" value="1"/>
</dbReference>
<name>SSRP_NEIMF</name>
<protein>
    <recommendedName>
        <fullName evidence="1">SsrA-binding protein</fullName>
    </recommendedName>
    <alternativeName>
        <fullName evidence="1">Small protein B</fullName>
    </alternativeName>
</protein>
<reference key="1">
    <citation type="journal article" date="2007" name="PLoS Genet.">
        <title>Meningococcal genetic variation mechanisms viewed through comparative analysis of serogroup C strain FAM18.</title>
        <authorList>
            <person name="Bentley S.D."/>
            <person name="Vernikos G.S."/>
            <person name="Snyder L.A.S."/>
            <person name="Churcher C."/>
            <person name="Arrowsmith C."/>
            <person name="Chillingworth T."/>
            <person name="Cronin A."/>
            <person name="Davis P.H."/>
            <person name="Holroyd N.E."/>
            <person name="Jagels K."/>
            <person name="Maddison M."/>
            <person name="Moule S."/>
            <person name="Rabbinowitsch E."/>
            <person name="Sharp S."/>
            <person name="Unwin L."/>
            <person name="Whitehead S."/>
            <person name="Quail M.A."/>
            <person name="Achtman M."/>
            <person name="Barrell B.G."/>
            <person name="Saunders N.J."/>
            <person name="Parkhill J."/>
        </authorList>
    </citation>
    <scope>NUCLEOTIDE SEQUENCE [LARGE SCALE GENOMIC DNA]</scope>
    <source>
        <strain>ATCC 700532 / DSM 15464 / FAM18</strain>
    </source>
</reference>
<gene>
    <name evidence="1" type="primary">smpB</name>
    <name type="ordered locus">NMC1455</name>
</gene>
<sequence>MAIANNKKAFHDFFIEDRIEAGLVLEGWEVKAIRAARVQLKESYIYWKKDAFYLVGCHITALPTASTHIKPDAVRPRKLLLNQSEINKLIGKTERAGYTIVPLDLHFSRGKIKMEIGLAKGKKQHDKRQSMKEADWKREKQRLIKHTR</sequence>